<accession>B0BAL2</accession>
<keyword id="KW-0131">Cell cycle</keyword>
<keyword id="KW-0132">Cell division</keyword>
<keyword id="KW-0997">Cell inner membrane</keyword>
<keyword id="KW-1003">Cell membrane</keyword>
<keyword id="KW-0133">Cell shape</keyword>
<keyword id="KW-0961">Cell wall biogenesis/degradation</keyword>
<keyword id="KW-0460">Magnesium</keyword>
<keyword id="KW-0472">Membrane</keyword>
<keyword id="KW-0479">Metal-binding</keyword>
<keyword id="KW-0573">Peptidoglycan synthesis</keyword>
<keyword id="KW-0808">Transferase</keyword>
<keyword id="KW-0812">Transmembrane</keyword>
<keyword id="KW-1133">Transmembrane helix</keyword>
<sequence length="336" mass="37091">MLPLTYVVKAFSIGLFFSLFLMKPLISWLKKQGFQDHIHKDHCEKLEELHKDKAYIPTAGGIVFVFASVLAVLLLFPIQLWSTWFCIGTILLWGALGWCDDQIKNRRRVGHGLSAKHKFLIQNCLAAGVVLPIMFAYKESFLSFHLPFLGIVSLPHHWWSYLLSFAIATLAIVGTSNSVNLTDGLDGLAAGAMVIACLGMLVVACTNGAPWAFICCVLLATLAGSCLGFLRYNKSPARVFMGDTGSLFLGAMLGMCAVLLRAEFLLLFMGGIFVLESLSVIVQVGSYKLRKKRVFLCAPLHHHYEYKGLSEKAVVRNFLIVELICVVVGIIAVFVD</sequence>
<gene>
    <name evidence="1" type="primary">mraY</name>
    <name type="ordered locus">CTLon_0126</name>
</gene>
<proteinExistence type="inferred from homology"/>
<feature type="chain" id="PRO_1000090611" description="Phospho-N-acetylmuramoyl-pentapeptide-transferase">
    <location>
        <begin position="1"/>
        <end position="336"/>
    </location>
</feature>
<feature type="transmembrane region" description="Helical" evidence="1">
    <location>
        <begin position="1"/>
        <end position="21"/>
    </location>
</feature>
<feature type="transmembrane region" description="Helical" evidence="1">
    <location>
        <begin position="56"/>
        <end position="76"/>
    </location>
</feature>
<feature type="transmembrane region" description="Helical" evidence="1">
    <location>
        <begin position="78"/>
        <end position="98"/>
    </location>
</feature>
<feature type="transmembrane region" description="Helical" evidence="1">
    <location>
        <begin position="124"/>
        <end position="144"/>
    </location>
</feature>
<feature type="transmembrane region" description="Helical" evidence="1">
    <location>
        <begin position="148"/>
        <end position="168"/>
    </location>
</feature>
<feature type="transmembrane region" description="Helical" evidence="1">
    <location>
        <begin position="184"/>
        <end position="204"/>
    </location>
</feature>
<feature type="transmembrane region" description="Helical" evidence="1">
    <location>
        <begin position="210"/>
        <end position="230"/>
    </location>
</feature>
<feature type="transmembrane region" description="Helical" evidence="1">
    <location>
        <begin position="239"/>
        <end position="259"/>
    </location>
</feature>
<feature type="transmembrane region" description="Helical" evidence="1">
    <location>
        <begin position="264"/>
        <end position="284"/>
    </location>
</feature>
<feature type="transmembrane region" description="Helical" evidence="1">
    <location>
        <begin position="314"/>
        <end position="334"/>
    </location>
</feature>
<protein>
    <recommendedName>
        <fullName evidence="1">Phospho-N-acetylmuramoyl-pentapeptide-transferase</fullName>
        <ecNumber evidence="1">2.7.8.13</ecNumber>
    </recommendedName>
    <alternativeName>
        <fullName evidence="1">UDP-MurNAc-pentapeptide phosphotransferase</fullName>
    </alternativeName>
</protein>
<dbReference type="EC" id="2.7.8.13" evidence="1"/>
<dbReference type="EMBL" id="AM884177">
    <property type="protein sequence ID" value="CAP06524.1"/>
    <property type="molecule type" value="Genomic_DNA"/>
</dbReference>
<dbReference type="RefSeq" id="WP_009872137.1">
    <property type="nucleotide sequence ID" value="NC_010280.2"/>
</dbReference>
<dbReference type="SMR" id="B0BAL2"/>
<dbReference type="KEGG" id="ctl:CTLon_0126"/>
<dbReference type="HOGENOM" id="CLU_023982_0_1_0"/>
<dbReference type="UniPathway" id="UPA00219"/>
<dbReference type="Proteomes" id="UP001154401">
    <property type="component" value="Chromosome"/>
</dbReference>
<dbReference type="GO" id="GO:0005886">
    <property type="term" value="C:plasma membrane"/>
    <property type="evidence" value="ECO:0007669"/>
    <property type="project" value="UniProtKB-SubCell"/>
</dbReference>
<dbReference type="GO" id="GO:0046872">
    <property type="term" value="F:metal ion binding"/>
    <property type="evidence" value="ECO:0007669"/>
    <property type="project" value="UniProtKB-KW"/>
</dbReference>
<dbReference type="GO" id="GO:0008963">
    <property type="term" value="F:phospho-N-acetylmuramoyl-pentapeptide-transferase activity"/>
    <property type="evidence" value="ECO:0007669"/>
    <property type="project" value="UniProtKB-UniRule"/>
</dbReference>
<dbReference type="GO" id="GO:0051992">
    <property type="term" value="F:UDP-N-acetylmuramoyl-L-alanyl-D-glutamyl-meso-2,6-diaminopimelyl-D-alanyl-D-alanine:undecaprenyl-phosphate transferase activity"/>
    <property type="evidence" value="ECO:0007669"/>
    <property type="project" value="RHEA"/>
</dbReference>
<dbReference type="GO" id="GO:0051301">
    <property type="term" value="P:cell division"/>
    <property type="evidence" value="ECO:0007669"/>
    <property type="project" value="UniProtKB-KW"/>
</dbReference>
<dbReference type="GO" id="GO:0071555">
    <property type="term" value="P:cell wall organization"/>
    <property type="evidence" value="ECO:0007669"/>
    <property type="project" value="UniProtKB-KW"/>
</dbReference>
<dbReference type="GO" id="GO:0009252">
    <property type="term" value="P:peptidoglycan biosynthetic process"/>
    <property type="evidence" value="ECO:0007669"/>
    <property type="project" value="UniProtKB-UniRule"/>
</dbReference>
<dbReference type="GO" id="GO:0008360">
    <property type="term" value="P:regulation of cell shape"/>
    <property type="evidence" value="ECO:0007669"/>
    <property type="project" value="UniProtKB-KW"/>
</dbReference>
<dbReference type="CDD" id="cd06852">
    <property type="entry name" value="GT_MraY"/>
    <property type="match status" value="1"/>
</dbReference>
<dbReference type="HAMAP" id="MF_00038">
    <property type="entry name" value="MraY"/>
    <property type="match status" value="1"/>
</dbReference>
<dbReference type="InterPro" id="IPR000715">
    <property type="entry name" value="Glycosyl_transferase_4"/>
</dbReference>
<dbReference type="InterPro" id="IPR003524">
    <property type="entry name" value="PNAcMuramoyl-5peptid_Trfase"/>
</dbReference>
<dbReference type="InterPro" id="IPR018480">
    <property type="entry name" value="PNAcMuramoyl-5peptid_Trfase_CS"/>
</dbReference>
<dbReference type="NCBIfam" id="TIGR00445">
    <property type="entry name" value="mraY"/>
    <property type="match status" value="1"/>
</dbReference>
<dbReference type="PANTHER" id="PTHR22926">
    <property type="entry name" value="PHOSPHO-N-ACETYLMURAMOYL-PENTAPEPTIDE-TRANSFERASE"/>
    <property type="match status" value="1"/>
</dbReference>
<dbReference type="PANTHER" id="PTHR22926:SF5">
    <property type="entry name" value="PHOSPHO-N-ACETYLMURAMOYL-PENTAPEPTIDE-TRANSFERASE HOMOLOG"/>
    <property type="match status" value="1"/>
</dbReference>
<dbReference type="Pfam" id="PF00953">
    <property type="entry name" value="Glycos_transf_4"/>
    <property type="match status" value="1"/>
</dbReference>
<dbReference type="PROSITE" id="PS01347">
    <property type="entry name" value="MRAY_1"/>
    <property type="match status" value="1"/>
</dbReference>
<dbReference type="PROSITE" id="PS01348">
    <property type="entry name" value="MRAY_2"/>
    <property type="match status" value="1"/>
</dbReference>
<name>MRAY_CHLTB</name>
<reference key="1">
    <citation type="journal article" date="2008" name="Genome Res.">
        <title>Chlamydia trachomatis: genome sequence analysis of lymphogranuloma venereum isolates.</title>
        <authorList>
            <person name="Thomson N.R."/>
            <person name="Holden M.T.G."/>
            <person name="Carder C."/>
            <person name="Lennard N."/>
            <person name="Lockey S.J."/>
            <person name="Marsh P."/>
            <person name="Skipp P."/>
            <person name="O'Connor C.D."/>
            <person name="Goodhead I."/>
            <person name="Norbertzcak H."/>
            <person name="Harris B."/>
            <person name="Ormond D."/>
            <person name="Rance R."/>
            <person name="Quail M.A."/>
            <person name="Parkhill J."/>
            <person name="Stephens R.S."/>
            <person name="Clarke I.N."/>
        </authorList>
    </citation>
    <scope>NUCLEOTIDE SEQUENCE [LARGE SCALE GENOMIC DNA]</scope>
    <source>
        <strain>UCH-1/proctitis</strain>
    </source>
</reference>
<organism>
    <name type="scientific">Chlamydia trachomatis serovar L2b (strain UCH-1/proctitis)</name>
    <dbReference type="NCBI Taxonomy" id="471473"/>
    <lineage>
        <taxon>Bacteria</taxon>
        <taxon>Pseudomonadati</taxon>
        <taxon>Chlamydiota</taxon>
        <taxon>Chlamydiia</taxon>
        <taxon>Chlamydiales</taxon>
        <taxon>Chlamydiaceae</taxon>
        <taxon>Chlamydia/Chlamydophila group</taxon>
        <taxon>Chlamydia</taxon>
    </lineage>
</organism>
<comment type="function">
    <text evidence="1">Catalyzes the initial step of the lipid cycle reactions in the biosynthesis of the cell wall peptidoglycan: transfers peptidoglycan precursor phospho-MurNAc-pentapeptide from UDP-MurNAc-pentapeptide onto the lipid carrier undecaprenyl phosphate, yielding undecaprenyl-pyrophosphoryl-MurNAc-pentapeptide, known as lipid I.</text>
</comment>
<comment type="catalytic activity">
    <reaction evidence="1">
        <text>UDP-N-acetyl-alpha-D-muramoyl-L-alanyl-gamma-D-glutamyl-meso-2,6-diaminopimeloyl-D-alanyl-D-alanine + di-trans,octa-cis-undecaprenyl phosphate = di-trans,octa-cis-undecaprenyl diphospho-N-acetyl-alpha-D-muramoyl-L-alanyl-D-glutamyl-meso-2,6-diaminopimeloyl-D-alanyl-D-alanine + UMP</text>
        <dbReference type="Rhea" id="RHEA:28386"/>
        <dbReference type="ChEBI" id="CHEBI:57865"/>
        <dbReference type="ChEBI" id="CHEBI:60392"/>
        <dbReference type="ChEBI" id="CHEBI:61386"/>
        <dbReference type="ChEBI" id="CHEBI:61387"/>
        <dbReference type="EC" id="2.7.8.13"/>
    </reaction>
</comment>
<comment type="cofactor">
    <cofactor evidence="1">
        <name>Mg(2+)</name>
        <dbReference type="ChEBI" id="CHEBI:18420"/>
    </cofactor>
</comment>
<comment type="pathway">
    <text evidence="1">Cell wall biogenesis; peptidoglycan biosynthesis.</text>
</comment>
<comment type="subcellular location">
    <subcellularLocation>
        <location evidence="1">Cell inner membrane</location>
        <topology evidence="1">Multi-pass membrane protein</topology>
    </subcellularLocation>
</comment>
<comment type="similarity">
    <text evidence="1">Belongs to the glycosyltransferase 4 family. MraY subfamily.</text>
</comment>
<evidence type="ECO:0000255" key="1">
    <source>
        <dbReference type="HAMAP-Rule" id="MF_00038"/>
    </source>
</evidence>